<reference key="1">
    <citation type="journal article" date="1997" name="Hum. Mol. Genet.">
        <title>Identification and characterization of human genes encoding Hprp3p and Hprp4p, interacting components of the spliceosome.</title>
        <authorList>
            <person name="Wang A."/>
            <person name="Forman-Kay J."/>
            <person name="Luo Y."/>
            <person name="Luo M."/>
            <person name="Chow Y.-H."/>
            <person name="Plumb J."/>
            <person name="Friesen J.D."/>
            <person name="Tsui L.-C."/>
            <person name="Heng H.H.Q."/>
            <person name="Woolford J.L. Jr."/>
            <person name="Hu J."/>
        </authorList>
    </citation>
    <scope>NUCLEOTIDE SEQUENCE [MRNA] (ISOFORM 1)</scope>
    <scope>INTERACTION WITH PRPF4 AND U4/U5/U6 SNRNPS</scope>
    <scope>SUBCELLULAR LOCATION</scope>
</reference>
<reference key="2">
    <citation type="journal article" date="1997" name="RNA">
        <title>A new cyclophilin and the human homologues of yeast Prp3 and Prp4 form a complex associated with U4/U6 snRNPs.</title>
        <authorList>
            <person name="Horowitz D.S."/>
            <person name="Kobayashi R."/>
            <person name="Krainer A.R."/>
        </authorList>
    </citation>
    <scope>NUCLEOTIDE SEQUENCE [MRNA] (ISOFORM 1)</scope>
    <scope>PROTEIN SEQUENCE OF 93-101; 253-267; 351-361; 409-428 AND 560-576</scope>
    <scope>INTERACTION WITH PPIH; PRPF4 AND U4/U6 SNRNPS</scope>
    <scope>SUBCELLULAR LOCATION</scope>
    <source>
        <tissue>Neuroepithelium</tissue>
    </source>
</reference>
<reference key="3">
    <citation type="journal article" date="2004" name="Nat. Genet.">
        <title>Complete sequencing and characterization of 21,243 full-length human cDNAs.</title>
        <authorList>
            <person name="Ota T."/>
            <person name="Suzuki Y."/>
            <person name="Nishikawa T."/>
            <person name="Otsuki T."/>
            <person name="Sugiyama T."/>
            <person name="Irie R."/>
            <person name="Wakamatsu A."/>
            <person name="Hayashi K."/>
            <person name="Sato H."/>
            <person name="Nagai K."/>
            <person name="Kimura K."/>
            <person name="Makita H."/>
            <person name="Sekine M."/>
            <person name="Obayashi M."/>
            <person name="Nishi T."/>
            <person name="Shibahara T."/>
            <person name="Tanaka T."/>
            <person name="Ishii S."/>
            <person name="Yamamoto J."/>
            <person name="Saito K."/>
            <person name="Kawai Y."/>
            <person name="Isono Y."/>
            <person name="Nakamura Y."/>
            <person name="Nagahari K."/>
            <person name="Murakami K."/>
            <person name="Yasuda T."/>
            <person name="Iwayanagi T."/>
            <person name="Wagatsuma M."/>
            <person name="Shiratori A."/>
            <person name="Sudo H."/>
            <person name="Hosoiri T."/>
            <person name="Kaku Y."/>
            <person name="Kodaira H."/>
            <person name="Kondo H."/>
            <person name="Sugawara M."/>
            <person name="Takahashi M."/>
            <person name="Kanda K."/>
            <person name="Yokoi T."/>
            <person name="Furuya T."/>
            <person name="Kikkawa E."/>
            <person name="Omura Y."/>
            <person name="Abe K."/>
            <person name="Kamihara K."/>
            <person name="Katsuta N."/>
            <person name="Sato K."/>
            <person name="Tanikawa M."/>
            <person name="Yamazaki M."/>
            <person name="Ninomiya K."/>
            <person name="Ishibashi T."/>
            <person name="Yamashita H."/>
            <person name="Murakawa K."/>
            <person name="Fujimori K."/>
            <person name="Tanai H."/>
            <person name="Kimata M."/>
            <person name="Watanabe M."/>
            <person name="Hiraoka S."/>
            <person name="Chiba Y."/>
            <person name="Ishida S."/>
            <person name="Ono Y."/>
            <person name="Takiguchi S."/>
            <person name="Watanabe S."/>
            <person name="Yosida M."/>
            <person name="Hotuta T."/>
            <person name="Kusano J."/>
            <person name="Kanehori K."/>
            <person name="Takahashi-Fujii A."/>
            <person name="Hara H."/>
            <person name="Tanase T.-O."/>
            <person name="Nomura Y."/>
            <person name="Togiya S."/>
            <person name="Komai F."/>
            <person name="Hara R."/>
            <person name="Takeuchi K."/>
            <person name="Arita M."/>
            <person name="Imose N."/>
            <person name="Musashino K."/>
            <person name="Yuuki H."/>
            <person name="Oshima A."/>
            <person name="Sasaki N."/>
            <person name="Aotsuka S."/>
            <person name="Yoshikawa Y."/>
            <person name="Matsunawa H."/>
            <person name="Ichihara T."/>
            <person name="Shiohata N."/>
            <person name="Sano S."/>
            <person name="Moriya S."/>
            <person name="Momiyama H."/>
            <person name="Satoh N."/>
            <person name="Takami S."/>
            <person name="Terashima Y."/>
            <person name="Suzuki O."/>
            <person name="Nakagawa S."/>
            <person name="Senoh A."/>
            <person name="Mizoguchi H."/>
            <person name="Goto Y."/>
            <person name="Shimizu F."/>
            <person name="Wakebe H."/>
            <person name="Hishigaki H."/>
            <person name="Watanabe T."/>
            <person name="Sugiyama A."/>
            <person name="Takemoto M."/>
            <person name="Kawakami B."/>
            <person name="Yamazaki M."/>
            <person name="Watanabe K."/>
            <person name="Kumagai A."/>
            <person name="Itakura S."/>
            <person name="Fukuzumi Y."/>
            <person name="Fujimori Y."/>
            <person name="Komiyama M."/>
            <person name="Tashiro H."/>
            <person name="Tanigami A."/>
            <person name="Fujiwara T."/>
            <person name="Ono T."/>
            <person name="Yamada K."/>
            <person name="Fujii Y."/>
            <person name="Ozaki K."/>
            <person name="Hirao M."/>
            <person name="Ohmori Y."/>
            <person name="Kawabata A."/>
            <person name="Hikiji T."/>
            <person name="Kobatake N."/>
            <person name="Inagaki H."/>
            <person name="Ikema Y."/>
            <person name="Okamoto S."/>
            <person name="Okitani R."/>
            <person name="Kawakami T."/>
            <person name="Noguchi S."/>
            <person name="Itoh T."/>
            <person name="Shigeta K."/>
            <person name="Senba T."/>
            <person name="Matsumura K."/>
            <person name="Nakajima Y."/>
            <person name="Mizuno T."/>
            <person name="Morinaga M."/>
            <person name="Sasaki M."/>
            <person name="Togashi T."/>
            <person name="Oyama M."/>
            <person name="Hata H."/>
            <person name="Watanabe M."/>
            <person name="Komatsu T."/>
            <person name="Mizushima-Sugano J."/>
            <person name="Satoh T."/>
            <person name="Shirai Y."/>
            <person name="Takahashi Y."/>
            <person name="Nakagawa K."/>
            <person name="Okumura K."/>
            <person name="Nagase T."/>
            <person name="Nomura N."/>
            <person name="Kikuchi H."/>
            <person name="Masuho Y."/>
            <person name="Yamashita R."/>
            <person name="Nakai K."/>
            <person name="Yada T."/>
            <person name="Nakamura Y."/>
            <person name="Ohara O."/>
            <person name="Isogai T."/>
            <person name="Sugano S."/>
        </authorList>
    </citation>
    <scope>NUCLEOTIDE SEQUENCE [LARGE SCALE MRNA] (ISOFORM 2)</scope>
</reference>
<reference key="4">
    <citation type="journal article" date="2006" name="Nature">
        <title>The DNA sequence and biological annotation of human chromosome 1.</title>
        <authorList>
            <person name="Gregory S.G."/>
            <person name="Barlow K.F."/>
            <person name="McLay K.E."/>
            <person name="Kaul R."/>
            <person name="Swarbreck D."/>
            <person name="Dunham A."/>
            <person name="Scott C.E."/>
            <person name="Howe K.L."/>
            <person name="Woodfine K."/>
            <person name="Spencer C.C.A."/>
            <person name="Jones M.C."/>
            <person name="Gillson C."/>
            <person name="Searle S."/>
            <person name="Zhou Y."/>
            <person name="Kokocinski F."/>
            <person name="McDonald L."/>
            <person name="Evans R."/>
            <person name="Phillips K."/>
            <person name="Atkinson A."/>
            <person name="Cooper R."/>
            <person name="Jones C."/>
            <person name="Hall R.E."/>
            <person name="Andrews T.D."/>
            <person name="Lloyd C."/>
            <person name="Ainscough R."/>
            <person name="Almeida J.P."/>
            <person name="Ambrose K.D."/>
            <person name="Anderson F."/>
            <person name="Andrew R.W."/>
            <person name="Ashwell R.I.S."/>
            <person name="Aubin K."/>
            <person name="Babbage A.K."/>
            <person name="Bagguley C.L."/>
            <person name="Bailey J."/>
            <person name="Beasley H."/>
            <person name="Bethel G."/>
            <person name="Bird C.P."/>
            <person name="Bray-Allen S."/>
            <person name="Brown J.Y."/>
            <person name="Brown A.J."/>
            <person name="Buckley D."/>
            <person name="Burton J."/>
            <person name="Bye J."/>
            <person name="Carder C."/>
            <person name="Chapman J.C."/>
            <person name="Clark S.Y."/>
            <person name="Clarke G."/>
            <person name="Clee C."/>
            <person name="Cobley V."/>
            <person name="Collier R.E."/>
            <person name="Corby N."/>
            <person name="Coville G.J."/>
            <person name="Davies J."/>
            <person name="Deadman R."/>
            <person name="Dunn M."/>
            <person name="Earthrowl M."/>
            <person name="Ellington A.G."/>
            <person name="Errington H."/>
            <person name="Frankish A."/>
            <person name="Frankland J."/>
            <person name="French L."/>
            <person name="Garner P."/>
            <person name="Garnett J."/>
            <person name="Gay L."/>
            <person name="Ghori M.R.J."/>
            <person name="Gibson R."/>
            <person name="Gilby L.M."/>
            <person name="Gillett W."/>
            <person name="Glithero R.J."/>
            <person name="Grafham D.V."/>
            <person name="Griffiths C."/>
            <person name="Griffiths-Jones S."/>
            <person name="Grocock R."/>
            <person name="Hammond S."/>
            <person name="Harrison E.S.I."/>
            <person name="Hart E."/>
            <person name="Haugen E."/>
            <person name="Heath P.D."/>
            <person name="Holmes S."/>
            <person name="Holt K."/>
            <person name="Howden P.J."/>
            <person name="Hunt A.R."/>
            <person name="Hunt S.E."/>
            <person name="Hunter G."/>
            <person name="Isherwood J."/>
            <person name="James R."/>
            <person name="Johnson C."/>
            <person name="Johnson D."/>
            <person name="Joy A."/>
            <person name="Kay M."/>
            <person name="Kershaw J.K."/>
            <person name="Kibukawa M."/>
            <person name="Kimberley A.M."/>
            <person name="King A."/>
            <person name="Knights A.J."/>
            <person name="Lad H."/>
            <person name="Laird G."/>
            <person name="Lawlor S."/>
            <person name="Leongamornlert D.A."/>
            <person name="Lloyd D.M."/>
            <person name="Loveland J."/>
            <person name="Lovell J."/>
            <person name="Lush M.J."/>
            <person name="Lyne R."/>
            <person name="Martin S."/>
            <person name="Mashreghi-Mohammadi M."/>
            <person name="Matthews L."/>
            <person name="Matthews N.S.W."/>
            <person name="McLaren S."/>
            <person name="Milne S."/>
            <person name="Mistry S."/>
            <person name="Moore M.J.F."/>
            <person name="Nickerson T."/>
            <person name="O'Dell C.N."/>
            <person name="Oliver K."/>
            <person name="Palmeiri A."/>
            <person name="Palmer S.A."/>
            <person name="Parker A."/>
            <person name="Patel D."/>
            <person name="Pearce A.V."/>
            <person name="Peck A.I."/>
            <person name="Pelan S."/>
            <person name="Phelps K."/>
            <person name="Phillimore B.J."/>
            <person name="Plumb R."/>
            <person name="Rajan J."/>
            <person name="Raymond C."/>
            <person name="Rouse G."/>
            <person name="Saenphimmachak C."/>
            <person name="Sehra H.K."/>
            <person name="Sheridan E."/>
            <person name="Shownkeen R."/>
            <person name="Sims S."/>
            <person name="Skuce C.D."/>
            <person name="Smith M."/>
            <person name="Steward C."/>
            <person name="Subramanian S."/>
            <person name="Sycamore N."/>
            <person name="Tracey A."/>
            <person name="Tromans A."/>
            <person name="Van Helmond Z."/>
            <person name="Wall M."/>
            <person name="Wallis J.M."/>
            <person name="White S."/>
            <person name="Whitehead S.L."/>
            <person name="Wilkinson J.E."/>
            <person name="Willey D.L."/>
            <person name="Williams H."/>
            <person name="Wilming L."/>
            <person name="Wray P.W."/>
            <person name="Wu Z."/>
            <person name="Coulson A."/>
            <person name="Vaudin M."/>
            <person name="Sulston J.E."/>
            <person name="Durbin R.M."/>
            <person name="Hubbard T."/>
            <person name="Wooster R."/>
            <person name="Dunham I."/>
            <person name="Carter N.P."/>
            <person name="McVean G."/>
            <person name="Ross M.T."/>
            <person name="Harrow J."/>
            <person name="Olson M.V."/>
            <person name="Beck S."/>
            <person name="Rogers J."/>
            <person name="Bentley D.R."/>
        </authorList>
    </citation>
    <scope>NUCLEOTIDE SEQUENCE [LARGE SCALE GENOMIC DNA]</scope>
</reference>
<reference key="5">
    <citation type="submission" date="2005-09" db="EMBL/GenBank/DDBJ databases">
        <authorList>
            <person name="Mural R.J."/>
            <person name="Istrail S."/>
            <person name="Sutton G.G."/>
            <person name="Florea L."/>
            <person name="Halpern A.L."/>
            <person name="Mobarry C.M."/>
            <person name="Lippert R."/>
            <person name="Walenz B."/>
            <person name="Shatkay H."/>
            <person name="Dew I."/>
            <person name="Miller J.R."/>
            <person name="Flanigan M.J."/>
            <person name="Edwards N.J."/>
            <person name="Bolanos R."/>
            <person name="Fasulo D."/>
            <person name="Halldorsson B.V."/>
            <person name="Hannenhalli S."/>
            <person name="Turner R."/>
            <person name="Yooseph S."/>
            <person name="Lu F."/>
            <person name="Nusskern D.R."/>
            <person name="Shue B.C."/>
            <person name="Zheng X.H."/>
            <person name="Zhong F."/>
            <person name="Delcher A.L."/>
            <person name="Huson D.H."/>
            <person name="Kravitz S.A."/>
            <person name="Mouchard L."/>
            <person name="Reinert K."/>
            <person name="Remington K.A."/>
            <person name="Clark A.G."/>
            <person name="Waterman M.S."/>
            <person name="Eichler E.E."/>
            <person name="Adams M.D."/>
            <person name="Hunkapiller M.W."/>
            <person name="Myers E.W."/>
            <person name="Venter J.C."/>
        </authorList>
    </citation>
    <scope>NUCLEOTIDE SEQUENCE [LARGE SCALE GENOMIC DNA]</scope>
</reference>
<reference key="6">
    <citation type="journal article" date="2004" name="Genome Res.">
        <title>The status, quality, and expansion of the NIH full-length cDNA project: the Mammalian Gene Collection (MGC).</title>
        <authorList>
            <consortium name="The MGC Project Team"/>
        </authorList>
    </citation>
    <scope>NUCLEOTIDE SEQUENCE [LARGE SCALE MRNA] (ISOFORM 1)</scope>
    <source>
        <tissue>Eye</tissue>
        <tissue>Skin</tissue>
    </source>
</reference>
<reference key="7">
    <citation type="journal article" date="2004" name="Mol. Cell. Biol.">
        <title>Human U4/U6 snRNP recycling factor p110: mutational analysis reveals the function of the tetratricopeptide repeat domain in recycling.</title>
        <authorList>
            <person name="Medenbach J."/>
            <person name="Schreiner S."/>
            <person name="Liu S."/>
            <person name="Luhrmann R."/>
            <person name="Bindereif A."/>
        </authorList>
    </citation>
    <scope>INTERACTION WITH SART3</scope>
    <scope>REGION</scope>
</reference>
<reference key="8">
    <citation type="journal article" date="2006" name="Cell">
        <title>Global, in vivo, and site-specific phosphorylation dynamics in signaling networks.</title>
        <authorList>
            <person name="Olsen J.V."/>
            <person name="Blagoev B."/>
            <person name="Gnad F."/>
            <person name="Macek B."/>
            <person name="Kumar C."/>
            <person name="Mortensen P."/>
            <person name="Mann M."/>
        </authorList>
    </citation>
    <scope>PHOSPHORYLATION [LARGE SCALE ANALYSIS] AT SER-619</scope>
    <scope>IDENTIFICATION BY MASS SPECTROMETRY [LARGE SCALE ANALYSIS]</scope>
    <source>
        <tissue>Cervix carcinoma</tissue>
    </source>
</reference>
<reference key="9">
    <citation type="journal article" date="2006" name="RNA">
        <title>The network of protein-protein interactions within the human U4/U6.U5 tri-snRNP.</title>
        <authorList>
            <person name="Liu S."/>
            <person name="Rauhut R."/>
            <person name="Vornlocher H.-P."/>
            <person name="Luehrmann R."/>
        </authorList>
    </citation>
    <scope>SUBUNIT</scope>
</reference>
<reference key="10">
    <citation type="journal article" date="2008" name="Proc. Natl. Acad. Sci. U.S.A.">
        <title>A quantitative atlas of mitotic phosphorylation.</title>
        <authorList>
            <person name="Dephoure N."/>
            <person name="Zhou C."/>
            <person name="Villen J."/>
            <person name="Beausoleil S.A."/>
            <person name="Bakalarski C.E."/>
            <person name="Elledge S.J."/>
            <person name="Gygi S.P."/>
        </authorList>
    </citation>
    <scope>PHOSPHORYLATION [LARGE SCALE ANALYSIS] AT SER-164 AND THR-167</scope>
    <scope>IDENTIFICATION BY MASS SPECTROMETRY [LARGE SCALE ANALYSIS]</scope>
    <source>
        <tissue>Cervix carcinoma</tissue>
    </source>
</reference>
<reference key="11">
    <citation type="journal article" date="2008" name="Proteomics">
        <title>Large-scale phosphoproteome analysis of human liver tissue by enrichment and fractionation of phosphopeptides with strong anion exchange chromatography.</title>
        <authorList>
            <person name="Han G."/>
            <person name="Ye M."/>
            <person name="Zhou H."/>
            <person name="Jiang X."/>
            <person name="Feng S."/>
            <person name="Jiang X."/>
            <person name="Tian R."/>
            <person name="Wan D."/>
            <person name="Zou H."/>
            <person name="Gu J."/>
        </authorList>
    </citation>
    <scope>PHOSPHORYLATION [LARGE SCALE ANALYSIS] AT SER-619</scope>
    <scope>IDENTIFICATION BY MASS SPECTROMETRY [LARGE SCALE ANALYSIS]</scope>
    <source>
        <tissue>Liver</tissue>
    </source>
</reference>
<reference key="12">
    <citation type="journal article" date="2009" name="Anal. Chem.">
        <title>Lys-N and trypsin cover complementary parts of the phosphoproteome in a refined SCX-based approach.</title>
        <authorList>
            <person name="Gauci S."/>
            <person name="Helbig A.O."/>
            <person name="Slijper M."/>
            <person name="Krijgsveld J."/>
            <person name="Heck A.J."/>
            <person name="Mohammed S."/>
        </authorList>
    </citation>
    <scope>IDENTIFICATION BY MASS SPECTROMETRY [LARGE SCALE ANALYSIS]</scope>
</reference>
<reference key="13">
    <citation type="journal article" date="2009" name="Sci. Signal.">
        <title>Quantitative phosphoproteomic analysis of T cell receptor signaling reveals system-wide modulation of protein-protein interactions.</title>
        <authorList>
            <person name="Mayya V."/>
            <person name="Lundgren D.H."/>
            <person name="Hwang S.-I."/>
            <person name="Rezaul K."/>
            <person name="Wu L."/>
            <person name="Eng J.K."/>
            <person name="Rodionov V."/>
            <person name="Han D.K."/>
        </authorList>
    </citation>
    <scope>PHOSPHORYLATION [LARGE SCALE ANALYSIS] AT SER-619</scope>
    <scope>IDENTIFICATION BY MASS SPECTROMETRY [LARGE SCALE ANALYSIS]</scope>
    <source>
        <tissue>Leukemic T-cell</tissue>
    </source>
</reference>
<reference key="14">
    <citation type="journal article" date="2010" name="Genes Dev.">
        <title>The Prp19 complex and the Usp4Sart3 deubiquitinating enzyme control reversible ubiquitination at the spliceosome.</title>
        <authorList>
            <person name="Song E.J."/>
            <person name="Werner S.L."/>
            <person name="Neubauer J."/>
            <person name="Stegmeier F."/>
            <person name="Aspden J."/>
            <person name="Rio D."/>
            <person name="Harper J.W."/>
            <person name="Elledge S.J."/>
            <person name="Kirschner M.W."/>
            <person name="Rape M."/>
        </authorList>
    </citation>
    <scope>FUNCTION</scope>
    <scope>INTERACTION WITH PRPF8; PRPF19 AND SART3</scope>
    <scope>UBIQUITINATION BY PRPF19</scope>
    <scope>DEUBIQUITINATION BY USP4</scope>
</reference>
<reference key="15">
    <citation type="journal article" date="2010" name="Sci. Signal.">
        <title>Quantitative phosphoproteomics reveals widespread full phosphorylation site occupancy during mitosis.</title>
        <authorList>
            <person name="Olsen J.V."/>
            <person name="Vermeulen M."/>
            <person name="Santamaria A."/>
            <person name="Kumar C."/>
            <person name="Miller M.L."/>
            <person name="Jensen L.J."/>
            <person name="Gnad F."/>
            <person name="Cox J."/>
            <person name="Jensen T.S."/>
            <person name="Nigg E.A."/>
            <person name="Brunak S."/>
            <person name="Mann M."/>
        </authorList>
    </citation>
    <scope>PHOSPHORYLATION [LARGE SCALE ANALYSIS] AT SER-164; THR-167 AND SER-619</scope>
    <scope>IDENTIFICATION BY MASS SPECTROMETRY [LARGE SCALE ANALYSIS]</scope>
    <source>
        <tissue>Cervix carcinoma</tissue>
    </source>
</reference>
<reference key="16">
    <citation type="journal article" date="2011" name="BMC Syst. Biol.">
        <title>Initial characterization of the human central proteome.</title>
        <authorList>
            <person name="Burkard T.R."/>
            <person name="Planyavsky M."/>
            <person name="Kaupe I."/>
            <person name="Breitwieser F.P."/>
            <person name="Buerckstuemmer T."/>
            <person name="Bennett K.L."/>
            <person name="Superti-Furga G."/>
            <person name="Colinge J."/>
        </authorList>
    </citation>
    <scope>IDENTIFICATION BY MASS SPECTROMETRY [LARGE SCALE ANALYSIS]</scope>
</reference>
<reference key="17">
    <citation type="journal article" date="2011" name="Sci. Signal.">
        <title>System-wide temporal characterization of the proteome and phosphoproteome of human embryonic stem cell differentiation.</title>
        <authorList>
            <person name="Rigbolt K.T."/>
            <person name="Prokhorova T.A."/>
            <person name="Akimov V."/>
            <person name="Henningsen J."/>
            <person name="Johansen P.T."/>
            <person name="Kratchmarova I."/>
            <person name="Kassem M."/>
            <person name="Mann M."/>
            <person name="Olsen J.V."/>
            <person name="Blagoev B."/>
        </authorList>
    </citation>
    <scope>PHOSPHORYLATION [LARGE SCALE ANALYSIS] AT SER-619</scope>
    <scope>IDENTIFICATION BY MASS SPECTROMETRY [LARGE SCALE ANALYSIS]</scope>
</reference>
<reference key="18">
    <citation type="journal article" date="2013" name="J. Proteome Res.">
        <title>Toward a comprehensive characterization of a human cancer cell phosphoproteome.</title>
        <authorList>
            <person name="Zhou H."/>
            <person name="Di Palma S."/>
            <person name="Preisinger C."/>
            <person name="Peng M."/>
            <person name="Polat A.N."/>
            <person name="Heck A.J."/>
            <person name="Mohammed S."/>
        </authorList>
    </citation>
    <scope>PHOSPHORYLATION [LARGE SCALE ANALYSIS] AT SER-164 AND SER-619</scope>
    <scope>IDENTIFICATION BY MASS SPECTROMETRY [LARGE SCALE ANALYSIS]</scope>
    <source>
        <tissue>Cervix carcinoma</tissue>
        <tissue>Erythroleukemia</tissue>
    </source>
</reference>
<reference key="19">
    <citation type="journal article" date="2014" name="J. Proteomics">
        <title>An enzyme assisted RP-RPLC approach for in-depth analysis of human liver phosphoproteome.</title>
        <authorList>
            <person name="Bian Y."/>
            <person name="Song C."/>
            <person name="Cheng K."/>
            <person name="Dong M."/>
            <person name="Wang F."/>
            <person name="Huang J."/>
            <person name="Sun D."/>
            <person name="Wang L."/>
            <person name="Ye M."/>
            <person name="Zou H."/>
        </authorList>
    </citation>
    <scope>PHOSPHORYLATION [LARGE SCALE ANALYSIS] AT SER-619</scope>
    <scope>IDENTIFICATION BY MASS SPECTROMETRY [LARGE SCALE ANALYSIS]</scope>
    <source>
        <tissue>Liver</tissue>
    </source>
</reference>
<reference key="20">
    <citation type="journal article" date="2015" name="PLoS ONE">
        <title>Identification of Novel Proteins Co-Purifying with Cockayne Syndrome Group B (CSB) Reveals Potential Roles for CSB in RNA Metabolism and Chromatin Dynamics.</title>
        <authorList>
            <person name="Nicolai S."/>
            <person name="Filippi S."/>
            <person name="Caputo M."/>
            <person name="Cipak L."/>
            <person name="Gregan J."/>
            <person name="Ammerer G."/>
            <person name="Frontini M."/>
            <person name="Willems D."/>
            <person name="Prantera G."/>
            <person name="Balajee A.S."/>
            <person name="Proietti-De-Santis L."/>
        </authorList>
    </citation>
    <scope>INTERACTION WITH ERCC6</scope>
</reference>
<reference key="21">
    <citation type="journal article" date="2017" name="Nat. Struct. Mol. Biol.">
        <title>Site-specific mapping of the human SUMO proteome reveals co-modification with phosphorylation.</title>
        <authorList>
            <person name="Hendriks I.A."/>
            <person name="Lyon D."/>
            <person name="Young C."/>
            <person name="Jensen L.J."/>
            <person name="Vertegaal A.C."/>
            <person name="Nielsen M.L."/>
        </authorList>
    </citation>
    <scope>SUMOYLATION [LARGE SCALE ANALYSIS] AT LYS-139; LYS-244 AND LYS-252</scope>
    <scope>IDENTIFICATION BY MASS SPECTROMETRY [LARGE SCALE ANALYSIS]</scope>
</reference>
<reference key="22">
    <citation type="submission" date="2005-11" db="PDB data bank">
        <title>Solution structure of PWI domain in U4/U6 small nuclear ribonucleoprotein PRP3(HPRP3).</title>
        <authorList>
            <consortium name="RIKEN structural genomics initiative (RSGI)"/>
        </authorList>
    </citation>
    <scope>STRUCTURE BY NMR OF 1-79</scope>
</reference>
<reference evidence="18" key="23">
    <citation type="journal article" date="2016" name="Science">
        <title>Molecular architecture of the human U4/U6.U5 tri-snRNP.</title>
        <authorList>
            <person name="Agafonov D.E."/>
            <person name="Kastner B."/>
            <person name="Dybkov O."/>
            <person name="Hofele R.V."/>
            <person name="Liu W.T."/>
            <person name="Urlaub H."/>
            <person name="Luhrmann R."/>
            <person name="Stark H."/>
        </authorList>
    </citation>
    <scope>STRUCTURE BY ELECTRON MICROSCOPY (7.00 ANGSTROMS)</scope>
    <scope>SUBCELLULAR LOCATION</scope>
    <scope>SUBUNIT</scope>
    <scope>IDENTIFICATION BY MASS SPECTROMETRY</scope>
</reference>
<reference evidence="19" key="24">
    <citation type="journal article" date="2017" name="Cell">
        <title>Cryo-EM Structure of a Pre-catalytic Human Spliceosome Primed for Activation.</title>
        <authorList>
            <person name="Bertram K."/>
            <person name="Agafonov D.E."/>
            <person name="Dybkov O."/>
            <person name="Haselbach D."/>
            <person name="Leelaram M.N."/>
            <person name="Will C.L."/>
            <person name="Urlaub H."/>
            <person name="Kastner B."/>
            <person name="Luhrmann R."/>
            <person name="Stark H."/>
        </authorList>
    </citation>
    <scope>STRUCTURE BY ELECTRON MICROSCOPY (4.50 ANGSTROMS)</scope>
    <scope>SUBCELLULAR LOCATION</scope>
    <scope>SUBUNIT</scope>
    <scope>FUNCTION</scope>
    <scope>IDENTIFICATION BY MASS SPECTROMETRY</scope>
</reference>
<reference key="25">
    <citation type="journal article" date="2002" name="Hum. Mol. Genet.">
        <title>Mutations in HPRP3, a third member of pre-mRNA splicing factor genes, implicated in autosomal dominant retinitis pigmentosa.</title>
        <authorList>
            <person name="Chakarova C.F."/>
            <person name="Hims M.M."/>
            <person name="Bolz H."/>
            <person name="Abu-Safieh L."/>
            <person name="Patel R.J."/>
            <person name="Papaioannou M.G."/>
            <person name="Inglehearn C.F."/>
            <person name="Keen T.J."/>
            <person name="Willis C."/>
            <person name="Moore A.T."/>
            <person name="Rosenberg T."/>
            <person name="Webster A.R."/>
            <person name="Bird A.C."/>
            <person name="Gal A."/>
            <person name="Hunt D."/>
            <person name="Vithana E.N."/>
            <person name="Bhattacharya S.S."/>
        </authorList>
    </citation>
    <scope>VARIANTS RP18 SER-493 AND MET-494</scope>
    <scope>TISSUE SPECIFICITY</scope>
</reference>
<reference key="26">
    <citation type="journal article" date="2003" name="Invest. Ophthalmol. Vis. Sci.">
        <title>Mutations in the pre-mRNA splicing-factor genes PRPF3, PRPF8, and PRPF31 in Spanish families with autosomal dominant retinitis pigmentosa.</title>
        <authorList>
            <person name="Martinez-Gimeno M."/>
            <person name="Gamundi M.J."/>
            <person name="Hernan I."/>
            <person name="Maseras M."/>
            <person name="Milla E."/>
            <person name="Ayuso C."/>
            <person name="Garcia-Sandoval B."/>
            <person name="Beneyto M."/>
            <person name="Vilela C."/>
            <person name="Baiget M."/>
            <person name="Antinolo G."/>
            <person name="Carballo M."/>
        </authorList>
    </citation>
    <scope>VARIANT RP18 MET-494</scope>
</reference>
<reference key="27">
    <citation type="journal article" date="2008" name="Hum. Mol. Genet.">
        <title>Mutation in the splicing factor Hprp3p linked to retinitis pigmentosa impairs interactions within the U4/U6 snRNP complex.</title>
        <authorList>
            <person name="Gonzalez-Santos J.M."/>
            <person name="Cao H."/>
            <person name="Duan R.C."/>
            <person name="Hu J."/>
        </authorList>
    </citation>
    <scope>CHARACTERIZATION OF VARIANT RP18 MET-494</scope>
    <scope>SUBUNIT</scope>
    <scope>SUBCELLULAR LOCATION</scope>
</reference>
<gene>
    <name type="primary">PRPF3</name>
    <name evidence="14" type="synonym">HPRP3</name>
    <name type="synonym">PRP3</name>
</gene>
<evidence type="ECO:0000255" key="1">
    <source>
        <dbReference type="PROSITE-ProRule" id="PRU00627"/>
    </source>
</evidence>
<evidence type="ECO:0000256" key="2">
    <source>
        <dbReference type="SAM" id="MobiDB-lite"/>
    </source>
</evidence>
<evidence type="ECO:0000269" key="3">
    <source>
    </source>
</evidence>
<evidence type="ECO:0000269" key="4">
    <source>
    </source>
</evidence>
<evidence type="ECO:0000269" key="5">
    <source>
    </source>
</evidence>
<evidence type="ECO:0000269" key="6">
    <source>
    </source>
</evidence>
<evidence type="ECO:0000269" key="7">
    <source>
    </source>
</evidence>
<evidence type="ECO:0000269" key="8">
    <source>
    </source>
</evidence>
<evidence type="ECO:0000269" key="9">
    <source>
    </source>
</evidence>
<evidence type="ECO:0000269" key="10">
    <source>
    </source>
</evidence>
<evidence type="ECO:0000269" key="11">
    <source>
    </source>
</evidence>
<evidence type="ECO:0000269" key="12">
    <source>
    </source>
</evidence>
<evidence type="ECO:0000269" key="13">
    <source>
    </source>
</evidence>
<evidence type="ECO:0000303" key="14">
    <source>
    </source>
</evidence>
<evidence type="ECO:0000303" key="15">
    <source>
    </source>
</evidence>
<evidence type="ECO:0000305" key="16"/>
<evidence type="ECO:0000305" key="17">
    <source>
    </source>
</evidence>
<evidence type="ECO:0007744" key="18">
    <source>
        <dbReference type="PDB" id="3JCR"/>
    </source>
</evidence>
<evidence type="ECO:0007744" key="19">
    <source>
        <dbReference type="PDB" id="5O9Z"/>
    </source>
</evidence>
<evidence type="ECO:0007744" key="20">
    <source>
    </source>
</evidence>
<evidence type="ECO:0007744" key="21">
    <source>
    </source>
</evidence>
<evidence type="ECO:0007744" key="22">
    <source>
    </source>
</evidence>
<evidence type="ECO:0007744" key="23">
    <source>
    </source>
</evidence>
<evidence type="ECO:0007744" key="24">
    <source>
    </source>
</evidence>
<evidence type="ECO:0007744" key="25">
    <source>
    </source>
</evidence>
<evidence type="ECO:0007744" key="26">
    <source>
    </source>
</evidence>
<evidence type="ECO:0007744" key="27">
    <source>
    </source>
</evidence>
<evidence type="ECO:0007744" key="28">
    <source>
    </source>
</evidence>
<evidence type="ECO:0007829" key="29">
    <source>
        <dbReference type="PDB" id="1X4Q"/>
    </source>
</evidence>
<evidence type="ECO:0007829" key="30">
    <source>
        <dbReference type="PDB" id="8Q7N"/>
    </source>
</evidence>
<evidence type="ECO:0007829" key="31">
    <source>
        <dbReference type="PDB" id="8QOZ"/>
    </source>
</evidence>
<organism>
    <name type="scientific">Homo sapiens</name>
    <name type="common">Human</name>
    <dbReference type="NCBI Taxonomy" id="9606"/>
    <lineage>
        <taxon>Eukaryota</taxon>
        <taxon>Metazoa</taxon>
        <taxon>Chordata</taxon>
        <taxon>Craniata</taxon>
        <taxon>Vertebrata</taxon>
        <taxon>Euteleostomi</taxon>
        <taxon>Mammalia</taxon>
        <taxon>Eutheria</taxon>
        <taxon>Euarchontoglires</taxon>
        <taxon>Primates</taxon>
        <taxon>Haplorrhini</taxon>
        <taxon>Catarrhini</taxon>
        <taxon>Hominidae</taxon>
        <taxon>Homo</taxon>
    </lineage>
</organism>
<sequence length="683" mass="77529">MALSKRELDELKPWIEKTVKRVLGFSEPTVVTAALNCVGKGMDKKKAADHLKPFLDDSTLRFVDKLFEAVEEGRSSRHSKSSSDRSRKRELKEVFGDDSEISKESSGVKKRRIPRFEEVEEEPEVIPGPPSESPGMLTKLQIKQMMEAATRQIEERKKQLSFISPPTPQPKTPSSSQPERLPIGNTIQPSQAATFMNDAIEKARKAAELQARIQAQLALKPGLIGNANMVGLANLHAMGIAPPKVELKDQTKPTPLILDEQGRTVDATGKEIELTHRMPTLKANIRAVKREQFKQQLKEKPSEDMESNTFFDPRVSIAPSQRQRRTFKFHDKGKFEKIAQRLRTKAQLEKLQAEISQAARKTGIHTSTRLALIAPKKELKEGDIPEIEWWDSYIIPNGFDLTEENPKREDYFGITNLVEHPAQLNPPVDNDTPVTLGVYLTKKEQKKLRRQTRREAQKELQEKVRLGLMPPPEPKVRISNLMRVLGTEAVQDPTKVEAHVRAQMAKRQKAHEEANAARKLTAEQRKVKKIKKLKEDISQGVHISVYRVRNLSNPAKKFKIEANAGQLYLTGVVVLHKDVNVVVVEGGPKAQKKFKRLMLHRIKWDEQTSNTKGDDDEESDEEAVKKTNKCVLVWEGTAKDRSFGEMKFKQCPTENMAREHFKKHGAEHYWDLALSESVLESTD</sequence>
<feature type="chain" id="PRO_0000097044" description="U4/U6 small nuclear ribonucleoprotein Prp3">
    <location>
        <begin position="1"/>
        <end position="683"/>
    </location>
</feature>
<feature type="domain" description="PWI" evidence="1">
    <location>
        <begin position="1"/>
        <end position="87"/>
    </location>
</feature>
<feature type="region of interest" description="Disordered" evidence="2">
    <location>
        <begin position="73"/>
        <end position="135"/>
    </location>
</feature>
<feature type="region of interest" description="Disordered" evidence="2">
    <location>
        <begin position="153"/>
        <end position="183"/>
    </location>
</feature>
<feature type="region of interest" description="Mediates interaction with SART3" evidence="5">
    <location>
        <begin position="416"/>
        <end position="550"/>
    </location>
</feature>
<feature type="compositionally biased region" description="Basic and acidic residues" evidence="2">
    <location>
        <begin position="73"/>
        <end position="107"/>
    </location>
</feature>
<feature type="modified residue" description="Phosphoserine" evidence="22 24 26">
    <location>
        <position position="164"/>
    </location>
</feature>
<feature type="modified residue" description="Phosphothreonine" evidence="22 24">
    <location>
        <position position="167"/>
    </location>
</feature>
<feature type="modified residue" description="Phosphoserine" evidence="20 21 23 24 25 26 27">
    <location>
        <position position="619"/>
    </location>
</feature>
<feature type="cross-link" description="Glycyl lysine isopeptide (Lys-Gly) (interchain with G-Cter in SUMO2)" evidence="28">
    <location>
        <position position="139"/>
    </location>
</feature>
<feature type="cross-link" description="Glycyl lysine isopeptide (Lys-Gly) (interchain with G-Cter in SUMO2)" evidence="28">
    <location>
        <position position="244"/>
    </location>
</feature>
<feature type="cross-link" description="Glycyl lysine isopeptide (Lys-Gly) (interchain with G-Cter in SUMO2)" evidence="28">
    <location>
        <position position="252"/>
    </location>
</feature>
<feature type="splice variant" id="VSP_056265" description="In isoform 2." evidence="15">
    <location>
        <begin position="1"/>
        <end position="135"/>
    </location>
</feature>
<feature type="splice variant" id="VSP_056266" description="In isoform 2." evidence="15">
    <original>TEENPKREDYFGITN</original>
    <variation>GKSQERRLFWNHKSC</variation>
    <location>
        <begin position="402"/>
        <end position="416"/>
    </location>
</feature>
<feature type="splice variant" id="VSP_056267" description="In isoform 2." evidence="15">
    <location>
        <begin position="417"/>
        <end position="683"/>
    </location>
</feature>
<feature type="sequence variant" id="VAR_051286" description="In dbSNP:rs12736964.">
    <original>K</original>
    <variation>N</variation>
    <location>
        <position position="12"/>
    </location>
</feature>
<feature type="sequence variant" id="VAR_046735" description="In RP18; dbSNP:rs121434242." evidence="3">
    <original>P</original>
    <variation>S</variation>
    <location>
        <position position="493"/>
    </location>
</feature>
<feature type="sequence variant" id="VAR_016877" description="In RP18; reduces phosphorylation; impairs binding to PRPF4; impairs self-association; affects interaction with the U4/U5/U6 tri-snRNP complex; does not affect global pre-mRNA splicing; dbSNP:rs121434241." evidence="3 4 7">
    <original>T</original>
    <variation>M</variation>
    <location>
        <position position="494"/>
    </location>
</feature>
<feature type="sequence conflict" description="In Ref. 1; AAC09069." evidence="16" ref="1">
    <original>I</original>
    <variation>T</variation>
    <location>
        <position position="142"/>
    </location>
</feature>
<feature type="sequence conflict" description="In Ref. 1; AAC09069." evidence="16" ref="1">
    <original>EL</original>
    <variation>SV</variation>
    <location>
        <begin position="273"/>
        <end position="274"/>
    </location>
</feature>
<feature type="helix" evidence="29">
    <location>
        <begin position="5"/>
        <end position="23"/>
    </location>
</feature>
<feature type="helix" evidence="29">
    <location>
        <begin position="28"/>
        <end position="39"/>
    </location>
</feature>
<feature type="helix" evidence="29">
    <location>
        <begin position="44"/>
        <end position="51"/>
    </location>
</feature>
<feature type="turn" evidence="29">
    <location>
        <begin position="52"/>
        <end position="55"/>
    </location>
</feature>
<feature type="helix" evidence="29">
    <location>
        <begin position="56"/>
        <end position="58"/>
    </location>
</feature>
<feature type="helix" evidence="29">
    <location>
        <begin position="60"/>
        <end position="73"/>
    </location>
</feature>
<feature type="helix" evidence="30">
    <location>
        <begin position="389"/>
        <end position="394"/>
    </location>
</feature>
<feature type="strand" evidence="30">
    <location>
        <begin position="416"/>
        <end position="418"/>
    </location>
</feature>
<feature type="helix" evidence="30">
    <location>
        <begin position="442"/>
        <end position="465"/>
    </location>
</feature>
<feature type="turn" evidence="31">
    <location>
        <begin position="478"/>
        <end position="480"/>
    </location>
</feature>
<feature type="helix" evidence="30">
    <location>
        <begin position="481"/>
        <end position="484"/>
    </location>
</feature>
<feature type="helix" evidence="30">
    <location>
        <begin position="486"/>
        <end position="491"/>
    </location>
</feature>
<feature type="helix" evidence="30">
    <location>
        <begin position="493"/>
        <end position="518"/>
    </location>
</feature>
<feature type="helix" evidence="30">
    <location>
        <begin position="522"/>
        <end position="534"/>
    </location>
</feature>
<feature type="strand" evidence="30">
    <location>
        <begin position="541"/>
        <end position="549"/>
    </location>
</feature>
<feature type="helix" evidence="30">
    <location>
        <begin position="554"/>
        <end position="566"/>
    </location>
</feature>
<feature type="strand" evidence="30">
    <location>
        <begin position="570"/>
        <end position="575"/>
    </location>
</feature>
<feature type="strand" evidence="30">
    <location>
        <begin position="580"/>
        <end position="586"/>
    </location>
</feature>
<feature type="helix" evidence="30">
    <location>
        <begin position="588"/>
        <end position="600"/>
    </location>
</feature>
<feature type="strand" evidence="30">
    <location>
        <begin position="630"/>
        <end position="640"/>
    </location>
</feature>
<feature type="strand" evidence="30">
    <location>
        <begin position="647"/>
        <end position="650"/>
    </location>
</feature>
<feature type="helix" evidence="30">
    <location>
        <begin position="654"/>
        <end position="664"/>
    </location>
</feature>
<feature type="helix" evidence="30">
    <location>
        <begin position="667"/>
        <end position="682"/>
    </location>
</feature>
<comment type="function">
    <text evidence="10 11 17">Plays a role in pre-mRNA splicing as component of the U4/U6-U5 tri-snRNP complex that is involved in spliceosome assembly, and as component of the precatalytic spliceosome (spliceosome B complex).</text>
</comment>
<comment type="subunit">
    <text evidence="5 6 7 8 9 10 11 12 13">Component of the precatalytic spliceosome (spliceosome B complex) (PubMed:28781166). Component of the U4/U6-U5 tri-snRNP complex, a building block of the precatalytic spliceosome (spliceosome B complex) (PubMed:17932117, PubMed:26912367, PubMed:28781166, PubMed:9328476, PubMed:9404889). The U4/U6-U5 tri-snRNP complex is composed of the U4, U6 and U5 snRNAs and at least PRPF3, PRPF4, PRPF6, PRPF8, PRPF31, SNRNP200, TXNL4A, SNRNP40, SNRPB, SNRPD1, SNRPD2, SNRPD3, SNRPE, SNRPF, SNRPG, DDX23, CD2BP2, PPIH, SNU13, EFTUD2, SART1 and USP39, plus LSM2, LSM3, LSM4, LSM5, LSM6, LSM7 and LSM8 (PubMed:16723661, PubMed:26912367). Interacts directly with PRPF4 (PubMed:17932117, PubMed:9328476, PubMed:9404889). Part of a heteromeric complex containing PPIH, PRPF3 and PRPF4 that is stable in the absence of RNA (PubMed:9404889). Interacts with SART3; the interaction is direct and recruits the deubiquitinase USP4 to PRPF3 (PubMed:15314151, PubMed:20595234). Interacts with PRPF19. Interacts ('Lys-63'-linked polyubiquitinated) with PRPF8 (via the MPN (JAB/Mov34) domain); may stabilize the U4/U6-U5 tri-snRNP complex (PubMed:20595234). Interacts with ERCC6 (PubMed:26030138).</text>
</comment>
<comment type="interaction">
    <interactant intactId="EBI-744322">
        <id>O43395</id>
    </interactant>
    <interactant intactId="EBI-3866279">
        <id>Q9BWT7</id>
        <label>CARD10</label>
    </interactant>
    <organismsDiffer>false</organismsDiffer>
    <experiments>3</experiments>
</comment>
<comment type="interaction">
    <interactant intactId="EBI-744322">
        <id>O43395</id>
    </interactant>
    <interactant intactId="EBI-11977221">
        <id>Q86Z20</id>
        <label>CCDC125</label>
    </interactant>
    <organismsDiffer>false</organismsDiffer>
    <experiments>3</experiments>
</comment>
<comment type="interaction">
    <interactant intactId="EBI-744322">
        <id>O43395</id>
    </interactant>
    <interactant intactId="EBI-739624">
        <id>Q8NHQ1</id>
        <label>CEP70</label>
    </interactant>
    <organismsDiffer>false</organismsDiffer>
    <experiments>3</experiments>
</comment>
<comment type="interaction">
    <interactant intactId="EBI-744322">
        <id>O43395</id>
    </interactant>
    <interactant intactId="EBI-739789">
        <id>Q92997</id>
        <label>DVL3</label>
    </interactant>
    <organismsDiffer>false</organismsDiffer>
    <experiments>2</experiments>
</comment>
<comment type="interaction">
    <interactant intactId="EBI-744322">
        <id>O43395</id>
    </interactant>
    <interactant intactId="EBI-10175124">
        <id>Q8IZU0</id>
        <label>FAM9B</label>
    </interactant>
    <organismsDiffer>false</organismsDiffer>
    <experiments>9</experiments>
</comment>
<comment type="interaction">
    <interactant intactId="EBI-744322">
        <id>O43395</id>
    </interactant>
    <interactant intactId="EBI-11977403">
        <id>A0A0C3SFZ9</id>
        <label>FCHO1</label>
    </interactant>
    <organismsDiffer>false</organismsDiffer>
    <experiments>3</experiments>
</comment>
<comment type="interaction">
    <interactant intactId="EBI-744322">
        <id>O43395</id>
    </interactant>
    <interactant intactId="EBI-618309">
        <id>Q08379</id>
        <label>GOLGA2</label>
    </interactant>
    <organismsDiffer>false</organismsDiffer>
    <experiments>3</experiments>
</comment>
<comment type="interaction">
    <interactant intactId="EBI-744322">
        <id>O43395</id>
    </interactant>
    <interactant intactId="EBI-473189">
        <id>Q96D09</id>
        <label>GPRASP2</label>
    </interactant>
    <organismsDiffer>false</organismsDiffer>
    <experiments>3</experiments>
</comment>
<comment type="interaction">
    <interactant intactId="EBI-744322">
        <id>O43395</id>
    </interactant>
    <interactant intactId="EBI-7116203">
        <id>O75031</id>
        <label>HSF2BP</label>
    </interactant>
    <organismsDiffer>false</organismsDiffer>
    <experiments>3</experiments>
</comment>
<comment type="interaction">
    <interactant intactId="EBI-744322">
        <id>O43395</id>
    </interactant>
    <interactant intactId="EBI-1216080">
        <id>Q9Y250</id>
        <label>LZTS1</label>
    </interactant>
    <organismsDiffer>false</organismsDiffer>
    <experiments>3</experiments>
</comment>
<comment type="interaction">
    <interactant intactId="EBI-744322">
        <id>O43395</id>
    </interactant>
    <interactant intactId="EBI-1048159">
        <id>P55081</id>
        <label>MFAP1</label>
    </interactant>
    <organismsDiffer>false</organismsDiffer>
    <experiments>2</experiments>
</comment>
<comment type="interaction">
    <interactant intactId="EBI-744322">
        <id>O43395</id>
    </interactant>
    <interactant intactId="EBI-10172526">
        <id>Q9UJV3-2</id>
        <label>MID2</label>
    </interactant>
    <organismsDiffer>false</organismsDiffer>
    <experiments>3</experiments>
</comment>
<comment type="interaction">
    <interactant intactId="EBI-744322">
        <id>O43395</id>
    </interactant>
    <interactant intactId="EBI-7950997">
        <id>Q96RE7</id>
        <label>NACC1</label>
    </interactant>
    <organismsDiffer>false</organismsDiffer>
    <experiments>3</experiments>
</comment>
<comment type="interaction">
    <interactant intactId="EBI-744322">
        <id>O43395</id>
    </interactant>
    <interactant intactId="EBI-721539">
        <id>Q8N5F7</id>
        <label>NKAP</label>
    </interactant>
    <organismsDiffer>false</organismsDiffer>
    <experiments>2</experiments>
</comment>
<comment type="interaction">
    <interactant intactId="EBI-744322">
        <id>O43395</id>
    </interactant>
    <interactant intactId="EBI-3920396">
        <id>Q6ZUT1</id>
        <label>NKAPD1</label>
    </interactant>
    <organismsDiffer>false</organismsDiffer>
    <experiments>3</experiments>
</comment>
<comment type="interaction">
    <interactant intactId="EBI-744322">
        <id>O43395</id>
    </interactant>
    <interactant intactId="EBI-1051317">
        <id>Q9H4L5</id>
        <label>OSBPL3</label>
    </interactant>
    <organismsDiffer>false</organismsDiffer>
    <experiments>3</experiments>
</comment>
<comment type="interaction">
    <interactant intactId="EBI-744322">
        <id>O43395</id>
    </interactant>
    <interactant intactId="EBI-11527347">
        <id>Q8IXK0-5</id>
        <label>PHC2</label>
    </interactant>
    <organismsDiffer>false</organismsDiffer>
    <experiments>3</experiments>
</comment>
<comment type="interaction">
    <interactant intactId="EBI-744322">
        <id>O43395</id>
    </interactant>
    <interactant intactId="EBI-11532361">
        <id>P78356-2</id>
        <label>PIP4K2B</label>
    </interactant>
    <organismsDiffer>false</organismsDiffer>
    <experiments>3</experiments>
</comment>
<comment type="interaction">
    <interactant intactId="EBI-744322">
        <id>O43395</id>
    </interactant>
    <interactant intactId="EBI-744322">
        <id>O43395</id>
        <label>PRPF3</label>
    </interactant>
    <organismsDiffer>false</organismsDiffer>
    <experiments>2</experiments>
</comment>
<comment type="interaction">
    <interactant intactId="EBI-744322">
        <id>O43395</id>
    </interactant>
    <interactant intactId="EBI-536755">
        <id>O94906</id>
        <label>PRPF6</label>
    </interactant>
    <organismsDiffer>false</organismsDiffer>
    <experiments>5</experiments>
</comment>
<comment type="interaction">
    <interactant intactId="EBI-744322">
        <id>O43395</id>
    </interactant>
    <interactant intactId="EBI-357622">
        <id>O43242</id>
        <label>PSMD3</label>
    </interactant>
    <organismsDiffer>false</organismsDiffer>
    <experiments>3</experiments>
</comment>
<comment type="interaction">
    <interactant intactId="EBI-744322">
        <id>O43395</id>
    </interactant>
    <interactant intactId="EBI-447043">
        <id>Q15276</id>
        <label>RABEP1</label>
    </interactant>
    <organismsDiffer>false</organismsDiffer>
    <experiments>3</experiments>
</comment>
<comment type="interaction">
    <interactant intactId="EBI-744322">
        <id>O43395</id>
    </interactant>
    <interactant intactId="EBI-12002474">
        <id>Q2KHN1</id>
        <label>RNF151</label>
    </interactant>
    <organismsDiffer>false</organismsDiffer>
    <experiments>3</experiments>
</comment>
<comment type="interaction">
    <interactant intactId="EBI-744322">
        <id>O43395</id>
    </interactant>
    <interactant intactId="EBI-607761">
        <id>O43290</id>
        <label>SART1</label>
    </interactant>
    <organismsDiffer>false</organismsDiffer>
    <experiments>7</experiments>
</comment>
<comment type="interaction">
    <interactant intactId="EBI-744322">
        <id>O43395</id>
    </interactant>
    <interactant intactId="EBI-2462271">
        <id>Q15428</id>
        <label>SF3A2</label>
    </interactant>
    <organismsDiffer>false</organismsDiffer>
    <experiments>2</experiments>
</comment>
<comment type="interaction">
    <interactant intactId="EBI-744322">
        <id>O43395</id>
    </interactant>
    <interactant intactId="EBI-749111">
        <id>Q13435</id>
        <label>SF3B2</label>
    </interactant>
    <organismsDiffer>false</organismsDiffer>
    <experiments>2</experiments>
</comment>
<comment type="interaction">
    <interactant intactId="EBI-744322">
        <id>O43395</id>
    </interactant>
    <interactant intactId="EBI-724292">
        <id>Q8TBC3</id>
        <label>SHKBP1</label>
    </interactant>
    <organismsDiffer>false</organismsDiffer>
    <experiments>3</experiments>
</comment>
<comment type="interaction">
    <interactant intactId="EBI-744322">
        <id>O43395</id>
    </interactant>
    <interactant intactId="EBI-750559">
        <id>O95391</id>
        <label>SLU7</label>
    </interactant>
    <organismsDiffer>false</organismsDiffer>
    <experiments>2</experiments>
</comment>
<comment type="interaction">
    <interactant intactId="EBI-744322">
        <id>O43395</id>
    </interactant>
    <interactant intactId="EBI-1052641">
        <id>O75940</id>
        <label>SMNDC1</label>
    </interactant>
    <organismsDiffer>false</organismsDiffer>
    <experiments>3</experiments>
</comment>
<comment type="interaction">
    <interactant intactId="EBI-744322">
        <id>O43395</id>
    </interactant>
    <interactant intactId="EBI-2212028">
        <id>Q9Y2D8</id>
        <label>SSX2IP</label>
    </interactant>
    <organismsDiffer>false</organismsDiffer>
    <experiments>3</experiments>
</comment>
<comment type="interaction">
    <interactant intactId="EBI-744322">
        <id>O43395</id>
    </interactant>
    <interactant intactId="EBI-739510">
        <id>Q9HCM9</id>
        <label>TRIM39</label>
    </interactant>
    <organismsDiffer>false</organismsDiffer>
    <experiments>4</experiments>
</comment>
<comment type="interaction">
    <interactant intactId="EBI-744322">
        <id>O43395</id>
    </interactant>
    <interactant intactId="EBI-11523450">
        <id>Q9HCM9-2</id>
        <label>TRIM39</label>
    </interactant>
    <organismsDiffer>false</organismsDiffer>
    <experiments>8</experiments>
</comment>
<comment type="interaction">
    <interactant intactId="EBI-744322">
        <id>O43395</id>
    </interactant>
    <interactant intactId="EBI-723389">
        <id>Q6FI91</id>
        <label>TSPYL</label>
    </interactant>
    <organismsDiffer>false</organismsDiffer>
    <experiments>3</experiments>
</comment>
<comment type="interaction">
    <interactant intactId="EBI-744322">
        <id>O43395</id>
    </interactant>
    <interactant intactId="EBI-359793">
        <id>P40222</id>
        <label>TXLNA</label>
    </interactant>
    <organismsDiffer>false</organismsDiffer>
    <experiments>3</experiments>
</comment>
<comment type="interaction">
    <interactant intactId="EBI-744322">
        <id>O43395</id>
    </interactant>
    <interactant intactId="EBI-742339">
        <id>P26368</id>
        <label>U2AF2</label>
    </interactant>
    <organismsDiffer>false</organismsDiffer>
    <experiments>4</experiments>
</comment>
<comment type="interaction">
    <interactant intactId="EBI-744322">
        <id>O43395</id>
    </interactant>
    <interactant intactId="EBI-11097439">
        <id>P26368-2</id>
        <label>U2AF2</label>
    </interactant>
    <organismsDiffer>false</organismsDiffer>
    <experiments>3</experiments>
</comment>
<comment type="interaction">
    <interactant intactId="EBI-744322">
        <id>O43395</id>
    </interactant>
    <interactant intactId="EBI-947213">
        <id>Q8WW38</id>
        <label>ZFPM2</label>
    </interactant>
    <organismsDiffer>false</organismsDiffer>
    <experiments>3</experiments>
</comment>
<comment type="interaction">
    <interactant intactId="EBI-744322">
        <id>O43395</id>
    </interactant>
    <interactant intactId="EBI-527853">
        <id>Q9UGI0</id>
        <label>ZRANB1</label>
    </interactant>
    <organismsDiffer>false</organismsDiffer>
    <experiments>3</experiments>
</comment>
<comment type="subcellular location">
    <subcellularLocation>
        <location evidence="7 10 11 12 13">Nucleus</location>
    </subcellularLocation>
    <subcellularLocation>
        <location>Nucleus speckle</location>
    </subcellularLocation>
</comment>
<comment type="alternative products">
    <event type="alternative splicing"/>
    <isoform>
        <id>O43395-1</id>
        <name>1</name>
        <sequence type="displayed"/>
    </isoform>
    <isoform>
        <id>O43395-3</id>
        <name>2</name>
        <sequence type="described" ref="VSP_056265 VSP_056266 VSP_056267"/>
    </isoform>
</comment>
<comment type="tissue specificity">
    <text evidence="3">Highly expressed in retina, liver, kidney and blood. Detected at lower levels in heart and brain.</text>
</comment>
<comment type="PTM">
    <text evidence="8">Ubiquitinated. Undergoes 'Lys-63'-linked polyubiquitination by PRPF19 and deubiquitination by USP4. 'Lys-63'-linked ubiquitination increases the affinity for PRPF8 and may regulate the assembly of the U4/U6-U5 tri-snRNP complex.</text>
</comment>
<comment type="disease" evidence="3 4 7">
    <disease id="DI-00984">
        <name>Retinitis pigmentosa 18</name>
        <acronym>RP18</acronym>
        <description>A retinal dystrophy belonging to the group of pigmentary retinopathies. Retinitis pigmentosa is characterized by retinal pigment deposits visible on fundus examination and primary loss of rod photoreceptor cells followed by secondary loss of cone photoreceptors. Patients typically have night vision blindness and loss of midperipheral visual field. As their condition progresses, they lose their far peripheral visual field and eventually central vision as well.</description>
        <dbReference type="MIM" id="601414"/>
    </disease>
    <text>The disease is caused by variants affecting the gene represented in this entry.</text>
</comment>
<dbReference type="EMBL" id="AF001947">
    <property type="protein sequence ID" value="AAC09069.1"/>
    <property type="molecule type" value="mRNA"/>
</dbReference>
<dbReference type="EMBL" id="AF016370">
    <property type="protein sequence ID" value="AAC51926.1"/>
    <property type="molecule type" value="mRNA"/>
</dbReference>
<dbReference type="EMBL" id="AK299980">
    <property type="protein sequence ID" value="BAG61801.1"/>
    <property type="molecule type" value="mRNA"/>
</dbReference>
<dbReference type="EMBL" id="AL611942">
    <property type="status" value="NOT_ANNOTATED_CDS"/>
    <property type="molecule type" value="Genomic_DNA"/>
</dbReference>
<dbReference type="EMBL" id="CH471121">
    <property type="protein sequence ID" value="EAW53556.1"/>
    <property type="molecule type" value="Genomic_DNA"/>
</dbReference>
<dbReference type="EMBL" id="BC000184">
    <property type="protein sequence ID" value="AAH00184.1"/>
    <property type="molecule type" value="mRNA"/>
</dbReference>
<dbReference type="EMBL" id="BC001954">
    <property type="protein sequence ID" value="AAH01954.1"/>
    <property type="molecule type" value="mRNA"/>
</dbReference>
<dbReference type="CCDS" id="CCDS951.1">
    <molecule id="O43395-1"/>
</dbReference>
<dbReference type="PIR" id="T50839">
    <property type="entry name" value="T50839"/>
</dbReference>
<dbReference type="PIR" id="T50840">
    <property type="entry name" value="T50840"/>
</dbReference>
<dbReference type="RefSeq" id="NP_004689.1">
    <molecule id="O43395-1"/>
    <property type="nucleotide sequence ID" value="NM_004698.4"/>
</dbReference>
<dbReference type="RefSeq" id="XP_047289951.1">
    <molecule id="O43395-1"/>
    <property type="nucleotide sequence ID" value="XM_047433995.1"/>
</dbReference>
<dbReference type="RefSeq" id="XP_054195535.1">
    <molecule id="O43395-1"/>
    <property type="nucleotide sequence ID" value="XM_054339560.1"/>
</dbReference>
<dbReference type="PDB" id="1X4Q">
    <property type="method" value="NMR"/>
    <property type="chains" value="A=1-79"/>
</dbReference>
<dbReference type="PDB" id="3JCR">
    <property type="method" value="EM"/>
    <property type="resolution" value="7.00 A"/>
    <property type="chains" value="K=1-683"/>
</dbReference>
<dbReference type="PDB" id="5O9Z">
    <property type="method" value="EM"/>
    <property type="resolution" value="4.50 A"/>
    <property type="chains" value="E=1-683"/>
</dbReference>
<dbReference type="PDB" id="6AH0">
    <property type="method" value="EM"/>
    <property type="resolution" value="5.70 A"/>
    <property type="chains" value="J=1-683"/>
</dbReference>
<dbReference type="PDB" id="6AHD">
    <property type="method" value="EM"/>
    <property type="resolution" value="3.80 A"/>
    <property type="chains" value="J=1-683"/>
</dbReference>
<dbReference type="PDB" id="6QW6">
    <property type="method" value="EM"/>
    <property type="resolution" value="2.92 A"/>
    <property type="chains" value="4A=1-683"/>
</dbReference>
<dbReference type="PDB" id="6QX9">
    <property type="method" value="EM"/>
    <property type="resolution" value="3.28 A"/>
    <property type="chains" value="4A=1-683"/>
</dbReference>
<dbReference type="PDB" id="7N2N">
    <property type="method" value="X-ray"/>
    <property type="resolution" value="2.60 A"/>
    <property type="chains" value="C=368-376"/>
</dbReference>
<dbReference type="PDB" id="7N2R">
    <property type="method" value="X-ray"/>
    <property type="resolution" value="2.28 A"/>
    <property type="chains" value="C=368-376"/>
</dbReference>
<dbReference type="PDB" id="7N2S">
    <property type="method" value="X-ray"/>
    <property type="resolution" value="2.37 A"/>
    <property type="chains" value="C=368-376"/>
</dbReference>
<dbReference type="PDB" id="8H6E">
    <property type="method" value="EM"/>
    <property type="resolution" value="3.20 A"/>
    <property type="chains" value="4B=1-683"/>
</dbReference>
<dbReference type="PDB" id="8H6J">
    <property type="method" value="EM"/>
    <property type="resolution" value="3.25 A"/>
    <property type="chains" value="4B=1-683"/>
</dbReference>
<dbReference type="PDB" id="8H6K">
    <property type="method" value="EM"/>
    <property type="resolution" value="2.70 A"/>
    <property type="chains" value="4B=1-683"/>
</dbReference>
<dbReference type="PDB" id="8H6L">
    <property type="method" value="EM"/>
    <property type="resolution" value="2.60 A"/>
    <property type="chains" value="4B=1-683"/>
</dbReference>
<dbReference type="PDB" id="8Q7N">
    <property type="method" value="EM"/>
    <property type="resolution" value="3.10 A"/>
    <property type="chains" value="J=1-683"/>
</dbReference>
<dbReference type="PDB" id="8QO9">
    <property type="method" value="EM"/>
    <property type="resolution" value="5.29 A"/>
    <property type="chains" value="J=1-683"/>
</dbReference>
<dbReference type="PDB" id="8QOZ">
    <property type="method" value="EM"/>
    <property type="resolution" value="3.10 A"/>
    <property type="chains" value="J=1-683"/>
</dbReference>
<dbReference type="PDB" id="8QP8">
    <property type="method" value="EM"/>
    <property type="resolution" value="3.50 A"/>
    <property type="chains" value="J=1-683"/>
</dbReference>
<dbReference type="PDB" id="8QP9">
    <property type="method" value="EM"/>
    <property type="resolution" value="4.10 A"/>
    <property type="chains" value="J=1-683"/>
</dbReference>
<dbReference type="PDB" id="8QPA">
    <property type="method" value="EM"/>
    <property type="resolution" value="3.70 A"/>
    <property type="chains" value="J=1-683"/>
</dbReference>
<dbReference type="PDB" id="8QPB">
    <property type="method" value="EM"/>
    <property type="resolution" value="3.70 A"/>
    <property type="chains" value="J=1-683"/>
</dbReference>
<dbReference type="PDB" id="8QPE">
    <property type="method" value="EM"/>
    <property type="resolution" value="3.10 A"/>
    <property type="chains" value="J=1-683"/>
</dbReference>
<dbReference type="PDB" id="8QXD">
    <property type="method" value="EM"/>
    <property type="resolution" value="9.60 A"/>
    <property type="chains" value="J=1-683"/>
</dbReference>
<dbReference type="PDB" id="8QZS">
    <property type="method" value="EM"/>
    <property type="resolution" value="4.10 A"/>
    <property type="chains" value="J=1-683"/>
</dbReference>
<dbReference type="PDB" id="8R08">
    <property type="method" value="EM"/>
    <property type="resolution" value="6.10 A"/>
    <property type="chains" value="J=1-683"/>
</dbReference>
<dbReference type="PDB" id="8R09">
    <property type="method" value="EM"/>
    <property type="resolution" value="4.30 A"/>
    <property type="chains" value="J=1-683"/>
</dbReference>
<dbReference type="PDB" id="8R0A">
    <property type="method" value="EM"/>
    <property type="resolution" value="5.80 A"/>
    <property type="chains" value="J=1-683"/>
</dbReference>
<dbReference type="PDB" id="8R0B">
    <property type="method" value="EM"/>
    <property type="resolution" value="4.40 A"/>
    <property type="chains" value="J=1-683"/>
</dbReference>
<dbReference type="PDB" id="8RM5">
    <property type="method" value="EM"/>
    <property type="resolution" value="6.90 A"/>
    <property type="chains" value="J=1-683"/>
</dbReference>
<dbReference type="PDB" id="8Y6O">
    <property type="method" value="EM"/>
    <property type="resolution" value="3.38 A"/>
    <property type="chains" value="N=1-683"/>
</dbReference>
<dbReference type="PDBsum" id="1X4Q"/>
<dbReference type="PDBsum" id="3JCR"/>
<dbReference type="PDBsum" id="5O9Z"/>
<dbReference type="PDBsum" id="6AH0"/>
<dbReference type="PDBsum" id="6AHD"/>
<dbReference type="PDBsum" id="6QW6"/>
<dbReference type="PDBsum" id="6QX9"/>
<dbReference type="PDBsum" id="7N2N"/>
<dbReference type="PDBsum" id="7N2R"/>
<dbReference type="PDBsum" id="7N2S"/>
<dbReference type="PDBsum" id="8H6E"/>
<dbReference type="PDBsum" id="8H6J"/>
<dbReference type="PDBsum" id="8H6K"/>
<dbReference type="PDBsum" id="8H6L"/>
<dbReference type="PDBsum" id="8Q7N"/>
<dbReference type="PDBsum" id="8QO9"/>
<dbReference type="PDBsum" id="8QOZ"/>
<dbReference type="PDBsum" id="8QP8"/>
<dbReference type="PDBsum" id="8QP9"/>
<dbReference type="PDBsum" id="8QPA"/>
<dbReference type="PDBsum" id="8QPB"/>
<dbReference type="PDBsum" id="8QPE"/>
<dbReference type="PDBsum" id="8QXD"/>
<dbReference type="PDBsum" id="8QZS"/>
<dbReference type="PDBsum" id="8R08"/>
<dbReference type="PDBsum" id="8R09"/>
<dbReference type="PDBsum" id="8R0A"/>
<dbReference type="PDBsum" id="8R0B"/>
<dbReference type="PDBsum" id="8RM5"/>
<dbReference type="PDBsum" id="8Y6O"/>
<dbReference type="EMDB" id="EMD-18225"/>
<dbReference type="EMDB" id="EMD-18529"/>
<dbReference type="EMDB" id="EMD-18542"/>
<dbReference type="EMDB" id="EMD-18544"/>
<dbReference type="EMDB" id="EMD-18545"/>
<dbReference type="EMDB" id="EMD-18546"/>
<dbReference type="EMDB" id="EMD-18547"/>
<dbReference type="EMDB" id="EMD-18548"/>
<dbReference type="EMDB" id="EMD-18718"/>
<dbReference type="EMDB" id="EMD-18781"/>
<dbReference type="EMDB" id="EMD-18786"/>
<dbReference type="EMDB" id="EMD-18787"/>
<dbReference type="EMDB" id="EMD-18788"/>
<dbReference type="EMDB" id="EMD-18789"/>
<dbReference type="EMDB" id="EMD-19349"/>
<dbReference type="EMDB" id="EMD-34500"/>
<dbReference type="EMDB" id="EMD-34505"/>
<dbReference type="EMDB" id="EMD-34507"/>
<dbReference type="EMDB" id="EMD-34508"/>
<dbReference type="EMDB" id="EMD-3766"/>
<dbReference type="EMDB" id="EMD-38993"/>
<dbReference type="EMDB" id="EMD-4658"/>
<dbReference type="EMDB" id="EMD-4665"/>
<dbReference type="EMDB" id="EMD-9621"/>
<dbReference type="EMDB" id="EMD-9624"/>
<dbReference type="SMR" id="O43395"/>
<dbReference type="BioGRID" id="114577">
    <property type="interactions" value="277"/>
</dbReference>
<dbReference type="CORUM" id="O43395"/>
<dbReference type="DIP" id="DIP-34508N"/>
<dbReference type="FunCoup" id="O43395">
    <property type="interactions" value="4689"/>
</dbReference>
<dbReference type="IntAct" id="O43395">
    <property type="interactions" value="143"/>
</dbReference>
<dbReference type="MINT" id="O43395"/>
<dbReference type="STRING" id="9606.ENSP00000315379"/>
<dbReference type="GlyCosmos" id="O43395">
    <property type="glycosylation" value="3 sites, 1 glycan"/>
</dbReference>
<dbReference type="GlyGen" id="O43395">
    <property type="glycosylation" value="7 sites, 1 N-linked glycan (1 site), 1 O-linked glycan (6 sites)"/>
</dbReference>
<dbReference type="iPTMnet" id="O43395"/>
<dbReference type="MetOSite" id="O43395"/>
<dbReference type="PhosphoSitePlus" id="O43395"/>
<dbReference type="SwissPalm" id="O43395"/>
<dbReference type="BioMuta" id="PRPF3"/>
<dbReference type="jPOST" id="O43395"/>
<dbReference type="MassIVE" id="O43395"/>
<dbReference type="PaxDb" id="9606-ENSP00000315379"/>
<dbReference type="PeptideAtlas" id="O43395"/>
<dbReference type="ProteomicsDB" id="48921">
    <molecule id="O43395-1"/>
</dbReference>
<dbReference type="ProteomicsDB" id="5058"/>
<dbReference type="Pumba" id="O43395"/>
<dbReference type="Antibodypedia" id="20281">
    <property type="antibodies" value="189 antibodies from 31 providers"/>
</dbReference>
<dbReference type="DNASU" id="9129"/>
<dbReference type="Ensembl" id="ENST00000324862.7">
    <molecule id="O43395-1"/>
    <property type="protein sequence ID" value="ENSP00000315379.6"/>
    <property type="gene ID" value="ENSG00000117360.13"/>
</dbReference>
<dbReference type="GeneID" id="9129"/>
<dbReference type="KEGG" id="hsa:9129"/>
<dbReference type="MANE-Select" id="ENST00000324862.7">
    <property type="protein sequence ID" value="ENSP00000315379.6"/>
    <property type="RefSeq nucleotide sequence ID" value="NM_004698.4"/>
    <property type="RefSeq protein sequence ID" value="NP_004689.1"/>
</dbReference>
<dbReference type="UCSC" id="uc001eum.5">
    <molecule id="O43395-1"/>
    <property type="organism name" value="human"/>
</dbReference>
<dbReference type="AGR" id="HGNC:17348"/>
<dbReference type="CTD" id="9129"/>
<dbReference type="DisGeNET" id="9129"/>
<dbReference type="GeneCards" id="PRPF3"/>
<dbReference type="GeneReviews" id="PRPF3"/>
<dbReference type="HGNC" id="HGNC:17348">
    <property type="gene designation" value="PRPF3"/>
</dbReference>
<dbReference type="HPA" id="ENSG00000117360">
    <property type="expression patterns" value="Low tissue specificity"/>
</dbReference>
<dbReference type="MalaCards" id="PRPF3"/>
<dbReference type="MIM" id="601414">
    <property type="type" value="phenotype"/>
</dbReference>
<dbReference type="MIM" id="607301">
    <property type="type" value="gene"/>
</dbReference>
<dbReference type="neXtProt" id="NX_O43395"/>
<dbReference type="OpenTargets" id="ENSG00000117360"/>
<dbReference type="Orphanet" id="791">
    <property type="disease" value="Retinitis pigmentosa"/>
</dbReference>
<dbReference type="PharmGKB" id="PA134892509"/>
<dbReference type="VEuPathDB" id="HostDB:ENSG00000117360"/>
<dbReference type="eggNOG" id="KOG2769">
    <property type="taxonomic scope" value="Eukaryota"/>
</dbReference>
<dbReference type="GeneTree" id="ENSGT00390000011497"/>
<dbReference type="HOGENOM" id="CLU_015750_3_0_1"/>
<dbReference type="InParanoid" id="O43395"/>
<dbReference type="OMA" id="NPQHRFK"/>
<dbReference type="OrthoDB" id="10264544at2759"/>
<dbReference type="PAN-GO" id="O43395">
    <property type="GO annotations" value="2 GO annotations based on evolutionary models"/>
</dbReference>
<dbReference type="PhylomeDB" id="O43395"/>
<dbReference type="TreeFam" id="TF313082"/>
<dbReference type="PathwayCommons" id="O43395"/>
<dbReference type="Reactome" id="R-HSA-72163">
    <property type="pathway name" value="mRNA Splicing - Major Pathway"/>
</dbReference>
<dbReference type="SignaLink" id="O43395"/>
<dbReference type="SIGNOR" id="O43395"/>
<dbReference type="BioGRID-ORCS" id="9129">
    <property type="hits" value="672 hits in 1159 CRISPR screens"/>
</dbReference>
<dbReference type="CD-CODE" id="91857CE7">
    <property type="entry name" value="Nucleolus"/>
</dbReference>
<dbReference type="ChiTaRS" id="PRPF3">
    <property type="organism name" value="human"/>
</dbReference>
<dbReference type="EvolutionaryTrace" id="O43395"/>
<dbReference type="GeneWiki" id="PRPF3"/>
<dbReference type="GenomeRNAi" id="9129"/>
<dbReference type="Pharos" id="O43395">
    <property type="development level" value="Tbio"/>
</dbReference>
<dbReference type="PRO" id="PR:O43395"/>
<dbReference type="Proteomes" id="UP000005640">
    <property type="component" value="Chromosome 1"/>
</dbReference>
<dbReference type="RNAct" id="O43395">
    <property type="molecule type" value="protein"/>
</dbReference>
<dbReference type="Bgee" id="ENSG00000117360">
    <property type="expression patterns" value="Expressed in sural nerve and 202 other cell types or tissues"/>
</dbReference>
<dbReference type="GO" id="GO:0015030">
    <property type="term" value="C:Cajal body"/>
    <property type="evidence" value="ECO:0000314"/>
    <property type="project" value="BHF-UCL"/>
</dbReference>
<dbReference type="GO" id="GO:0005829">
    <property type="term" value="C:cytosol"/>
    <property type="evidence" value="ECO:0000314"/>
    <property type="project" value="HPA"/>
</dbReference>
<dbReference type="GO" id="GO:0016607">
    <property type="term" value="C:nuclear speck"/>
    <property type="evidence" value="ECO:0000314"/>
    <property type="project" value="HPA"/>
</dbReference>
<dbReference type="GO" id="GO:0005654">
    <property type="term" value="C:nucleoplasm"/>
    <property type="evidence" value="ECO:0000314"/>
    <property type="project" value="HPA"/>
</dbReference>
<dbReference type="GO" id="GO:0005634">
    <property type="term" value="C:nucleus"/>
    <property type="evidence" value="ECO:0000314"/>
    <property type="project" value="UniProtKB"/>
</dbReference>
<dbReference type="GO" id="GO:0005681">
    <property type="term" value="C:spliceosomal complex"/>
    <property type="evidence" value="ECO:0000303"/>
    <property type="project" value="UniProtKB"/>
</dbReference>
<dbReference type="GO" id="GO:0071005">
    <property type="term" value="C:U2-type precatalytic spliceosome"/>
    <property type="evidence" value="ECO:0000314"/>
    <property type="project" value="UniProtKB"/>
</dbReference>
<dbReference type="GO" id="GO:0046540">
    <property type="term" value="C:U4/U6 x U5 tri-snRNP complex"/>
    <property type="evidence" value="ECO:0000314"/>
    <property type="project" value="UniProtKB"/>
</dbReference>
<dbReference type="GO" id="GO:0042802">
    <property type="term" value="F:identical protein binding"/>
    <property type="evidence" value="ECO:0000353"/>
    <property type="project" value="IntAct"/>
</dbReference>
<dbReference type="GO" id="GO:0003723">
    <property type="term" value="F:RNA binding"/>
    <property type="evidence" value="ECO:0007005"/>
    <property type="project" value="UniProtKB"/>
</dbReference>
<dbReference type="GO" id="GO:0006397">
    <property type="term" value="P:mRNA processing"/>
    <property type="evidence" value="ECO:0000304"/>
    <property type="project" value="ProtInc"/>
</dbReference>
<dbReference type="GO" id="GO:0000398">
    <property type="term" value="P:mRNA splicing, via spliceosome"/>
    <property type="evidence" value="ECO:0000314"/>
    <property type="project" value="UniProtKB"/>
</dbReference>
<dbReference type="GO" id="GO:0008380">
    <property type="term" value="P:RNA splicing"/>
    <property type="evidence" value="ECO:0000304"/>
    <property type="project" value="ProtInc"/>
</dbReference>
<dbReference type="GO" id="GO:0000375">
    <property type="term" value="P:RNA splicing, via transesterification reactions"/>
    <property type="evidence" value="ECO:0000304"/>
    <property type="project" value="UniProtKB"/>
</dbReference>
<dbReference type="GO" id="GO:0000244">
    <property type="term" value="P:spliceosomal tri-snRNP complex assembly"/>
    <property type="evidence" value="ECO:0000314"/>
    <property type="project" value="UniProtKB"/>
</dbReference>
<dbReference type="CDD" id="cd24162">
    <property type="entry name" value="Prp3_C"/>
    <property type="match status" value="1"/>
</dbReference>
<dbReference type="FunFam" id="1.20.1390.10:FF:000003">
    <property type="entry name" value="U4/U6 small nuclear ribonucleoprotein Prp3"/>
    <property type="match status" value="1"/>
</dbReference>
<dbReference type="Gene3D" id="1.20.1390.10">
    <property type="entry name" value="PWI domain"/>
    <property type="match status" value="1"/>
</dbReference>
<dbReference type="InterPro" id="IPR013881">
    <property type="entry name" value="Pre-mRNA_splic_Prp3_dom"/>
</dbReference>
<dbReference type="InterPro" id="IPR027104">
    <property type="entry name" value="Prp3"/>
</dbReference>
<dbReference type="InterPro" id="IPR010541">
    <property type="entry name" value="Prp3_C"/>
</dbReference>
<dbReference type="InterPro" id="IPR002483">
    <property type="entry name" value="PWI_dom"/>
</dbReference>
<dbReference type="InterPro" id="IPR036483">
    <property type="entry name" value="PWI_dom_sf"/>
</dbReference>
<dbReference type="PANTHER" id="PTHR14212">
    <property type="entry name" value="U4/U6-ASSOCIATED RNA SPLICING FACTOR-RELATED"/>
    <property type="match status" value="1"/>
</dbReference>
<dbReference type="PANTHER" id="PTHR14212:SF0">
    <property type="entry name" value="U4_U6 SMALL NUCLEAR RIBONUCLEOPROTEIN PRP3"/>
    <property type="match status" value="1"/>
</dbReference>
<dbReference type="Pfam" id="PF08572">
    <property type="entry name" value="PRP3"/>
    <property type="match status" value="1"/>
</dbReference>
<dbReference type="Pfam" id="PF06544">
    <property type="entry name" value="Prp3_C"/>
    <property type="match status" value="1"/>
</dbReference>
<dbReference type="Pfam" id="PF01480">
    <property type="entry name" value="PWI"/>
    <property type="match status" value="1"/>
</dbReference>
<dbReference type="SMART" id="SM00311">
    <property type="entry name" value="PWI"/>
    <property type="match status" value="1"/>
</dbReference>
<dbReference type="SUPFAM" id="SSF101233">
    <property type="entry name" value="PWI domain"/>
    <property type="match status" value="1"/>
</dbReference>
<dbReference type="PROSITE" id="PS51025">
    <property type="entry name" value="PWI"/>
    <property type="match status" value="1"/>
</dbReference>
<proteinExistence type="evidence at protein level"/>
<name>PRPF3_HUMAN</name>
<protein>
    <recommendedName>
        <fullName>U4/U6 small nuclear ribonucleoprotein Prp3</fullName>
    </recommendedName>
    <alternativeName>
        <fullName>Pre-mRNA-splicing factor 3</fullName>
        <shortName>hPrp3</shortName>
    </alternativeName>
    <alternativeName>
        <fullName>U4/U6 snRNP 90 kDa protein</fullName>
    </alternativeName>
</protein>
<keyword id="KW-0002">3D-structure</keyword>
<keyword id="KW-0025">Alternative splicing</keyword>
<keyword id="KW-0903">Direct protein sequencing</keyword>
<keyword id="KW-0225">Disease variant</keyword>
<keyword id="KW-1017">Isopeptide bond</keyword>
<keyword id="KW-0507">mRNA processing</keyword>
<keyword id="KW-0508">mRNA splicing</keyword>
<keyword id="KW-0539">Nucleus</keyword>
<keyword id="KW-0597">Phosphoprotein</keyword>
<keyword id="KW-1267">Proteomics identification</keyword>
<keyword id="KW-1185">Reference proteome</keyword>
<keyword id="KW-0682">Retinitis pigmentosa</keyword>
<keyword id="KW-0747">Spliceosome</keyword>
<keyword id="KW-0832">Ubl conjugation</keyword>
<accession>O43395</accession>
<accession>B4DSY9</accession>
<accession>O43446</accession>
<accession>Q5VT54</accession>